<proteinExistence type="evidence at protein level"/>
<organism>
    <name type="scientific">Chelonia mydas</name>
    <name type="common">Green sea-turtle</name>
    <name type="synonym">Chelonia agassizi</name>
    <dbReference type="NCBI Taxonomy" id="8469"/>
    <lineage>
        <taxon>Eukaryota</taxon>
        <taxon>Metazoa</taxon>
        <taxon>Chordata</taxon>
        <taxon>Craniata</taxon>
        <taxon>Vertebrata</taxon>
        <taxon>Euteleostomi</taxon>
        <taxon>Archelosauria</taxon>
        <taxon>Testudinata</taxon>
        <taxon>Testudines</taxon>
        <taxon>Cryptodira</taxon>
        <taxon>Durocryptodira</taxon>
        <taxon>Americhelydia</taxon>
        <taxon>Chelonioidea</taxon>
        <taxon>Cheloniidae</taxon>
        <taxon>Chelonia</taxon>
    </lineage>
</organism>
<accession>P33090</accession>
<sequence>LPICPSGSVGCQVSLENLFDRAVKLSHYIHSLSSEMFNEFDERYAQGRGFLTKAINGCHTSSLTTPEDKEQAQQIHHEDLLNLVLGVLRSWNDPLLHLVSEVQSIKEAPDTILKAVEIEEQDKRLLEGMEKIVGQVHPGEIENELYSPWSGLPSLQQVDEDSRLFAFYNLLHCLRRDSHKIDNYLKLLKCRLIHDNDC</sequence>
<name>PRL_CHEMY</name>
<comment type="subcellular location">
    <subcellularLocation>
        <location>Secreted</location>
    </subcellularLocation>
</comment>
<comment type="tissue specificity">
    <text>Pituitary gland.</text>
</comment>
<comment type="similarity">
    <text evidence="2">Belongs to the somatotropin/prolactin family.</text>
</comment>
<protein>
    <recommendedName>
        <fullName>Prolactin</fullName>
        <shortName>PRL</shortName>
    </recommendedName>
</protein>
<dbReference type="PIR" id="A60620">
    <property type="entry name" value="A60620"/>
</dbReference>
<dbReference type="SMR" id="P33090"/>
<dbReference type="eggNOG" id="ENOG502QYU3">
    <property type="taxonomic scope" value="Eukaryota"/>
</dbReference>
<dbReference type="GO" id="GO:0005615">
    <property type="term" value="C:extracellular space"/>
    <property type="evidence" value="ECO:0007669"/>
    <property type="project" value="TreeGrafter"/>
</dbReference>
<dbReference type="GO" id="GO:0005179">
    <property type="term" value="F:hormone activity"/>
    <property type="evidence" value="ECO:0007669"/>
    <property type="project" value="UniProtKB-KW"/>
</dbReference>
<dbReference type="GO" id="GO:0008284">
    <property type="term" value="P:positive regulation of cell population proliferation"/>
    <property type="evidence" value="ECO:0007669"/>
    <property type="project" value="TreeGrafter"/>
</dbReference>
<dbReference type="GO" id="GO:0046427">
    <property type="term" value="P:positive regulation of receptor signaling pathway via JAK-STAT"/>
    <property type="evidence" value="ECO:0007669"/>
    <property type="project" value="TreeGrafter"/>
</dbReference>
<dbReference type="GO" id="GO:0031667">
    <property type="term" value="P:response to nutrient levels"/>
    <property type="evidence" value="ECO:0007669"/>
    <property type="project" value="TreeGrafter"/>
</dbReference>
<dbReference type="CDD" id="cd10288">
    <property type="entry name" value="prolactin_like"/>
    <property type="match status" value="1"/>
</dbReference>
<dbReference type="FunFam" id="1.20.1250.10:FF:000003">
    <property type="entry name" value="Prolactin"/>
    <property type="match status" value="1"/>
</dbReference>
<dbReference type="Gene3D" id="1.20.1250.10">
    <property type="match status" value="1"/>
</dbReference>
<dbReference type="InterPro" id="IPR009079">
    <property type="entry name" value="4_helix_cytokine-like_core"/>
</dbReference>
<dbReference type="InterPro" id="IPR001400">
    <property type="entry name" value="Somatotropin/Prolactin"/>
</dbReference>
<dbReference type="InterPro" id="IPR018116">
    <property type="entry name" value="Somatotropin_CS"/>
</dbReference>
<dbReference type="PANTHER" id="PTHR11417:SF5">
    <property type="entry name" value="PROLACTIN"/>
    <property type="match status" value="1"/>
</dbReference>
<dbReference type="PANTHER" id="PTHR11417">
    <property type="entry name" value="SOMATOTROPIN,PROLACTIN"/>
    <property type="match status" value="1"/>
</dbReference>
<dbReference type="Pfam" id="PF00103">
    <property type="entry name" value="Hormone_1"/>
    <property type="match status" value="1"/>
</dbReference>
<dbReference type="PRINTS" id="PR00836">
    <property type="entry name" value="SOMATOTROPIN"/>
</dbReference>
<dbReference type="SUPFAM" id="SSF47266">
    <property type="entry name" value="4-helical cytokines"/>
    <property type="match status" value="1"/>
</dbReference>
<dbReference type="PROSITE" id="PS00266">
    <property type="entry name" value="SOMATOTROPIN_1"/>
    <property type="match status" value="1"/>
</dbReference>
<dbReference type="PROSITE" id="PS00338">
    <property type="entry name" value="SOMATOTROPIN_2"/>
    <property type="match status" value="1"/>
</dbReference>
<evidence type="ECO:0000269" key="1">
    <source>
    </source>
</evidence>
<evidence type="ECO:0000305" key="2"/>
<reference key="1">
    <citation type="journal article" date="1990" name="Gen. Comp. Endocrinol.">
        <title>The complete amino acid sequence of prolactin from the sea turtle (Chelonia mydas).</title>
        <authorList>
            <person name="Yasuda A."/>
            <person name="Kawauchi H."/>
            <person name="Papkoff H."/>
        </authorList>
    </citation>
    <scope>PROTEIN SEQUENCE</scope>
    <scope>DISULFIDE BONDS</scope>
</reference>
<keyword id="KW-0903">Direct protein sequencing</keyword>
<keyword id="KW-1015">Disulfide bond</keyword>
<keyword id="KW-0372">Hormone</keyword>
<keyword id="KW-0964">Secreted</keyword>
<feature type="chain" id="PRO_0000181323" description="Prolactin">
    <location>
        <begin position="1"/>
        <end position="198"/>
    </location>
</feature>
<feature type="disulfide bond" evidence="1">
    <location>
        <begin position="4"/>
        <end position="11"/>
    </location>
</feature>
<feature type="disulfide bond" evidence="1">
    <location>
        <begin position="58"/>
        <end position="173"/>
    </location>
</feature>
<feature type="disulfide bond" evidence="1">
    <location>
        <begin position="190"/>
        <end position="198"/>
    </location>
</feature>
<feature type="sequence variant">
    <original>I</original>
    <variation>L</variation>
    <location>
        <position position="55"/>
    </location>
</feature>
<feature type="sequence variant">
    <original>L</original>
    <variation>V</variation>
    <location>
        <position position="145"/>
    </location>
</feature>
<feature type="sequence variant">
    <original>P</original>
    <variation>R</variation>
    <location>
        <position position="148"/>
    </location>
</feature>
<feature type="sequence variant">
    <original>L</original>
    <variation>M</variation>
    <location>
        <position position="171"/>
    </location>
</feature>